<dbReference type="EC" id="2.3.1.74"/>
<dbReference type="EMBL" id="AB011467">
    <property type="protein sequence ID" value="BAA32732.1"/>
    <property type="molecule type" value="mRNA"/>
</dbReference>
<dbReference type="SMR" id="O82144"/>
<dbReference type="UniPathway" id="UPA00154"/>
<dbReference type="GO" id="GO:0016210">
    <property type="term" value="F:naringenin-chalcone synthase activity"/>
    <property type="evidence" value="ECO:0007669"/>
    <property type="project" value="UniProtKB-EC"/>
</dbReference>
<dbReference type="GO" id="GO:0009813">
    <property type="term" value="P:flavonoid biosynthetic process"/>
    <property type="evidence" value="ECO:0007669"/>
    <property type="project" value="UniProtKB-UniPathway"/>
</dbReference>
<dbReference type="GO" id="GO:0030639">
    <property type="term" value="P:polyketide biosynthetic process"/>
    <property type="evidence" value="ECO:0007669"/>
    <property type="project" value="TreeGrafter"/>
</dbReference>
<dbReference type="CDD" id="cd00831">
    <property type="entry name" value="CHS_like"/>
    <property type="match status" value="1"/>
</dbReference>
<dbReference type="FunFam" id="3.40.47.10:FF:000014">
    <property type="entry name" value="Chalcone synthase 1"/>
    <property type="match status" value="1"/>
</dbReference>
<dbReference type="FunFam" id="3.40.47.10:FF:000025">
    <property type="entry name" value="Chalcone synthase 2"/>
    <property type="match status" value="1"/>
</dbReference>
<dbReference type="Gene3D" id="3.40.47.10">
    <property type="match status" value="2"/>
</dbReference>
<dbReference type="InterPro" id="IPR012328">
    <property type="entry name" value="Chalcone/stilbene_synt_C"/>
</dbReference>
<dbReference type="InterPro" id="IPR001099">
    <property type="entry name" value="Chalcone/stilbene_synt_N"/>
</dbReference>
<dbReference type="InterPro" id="IPR018088">
    <property type="entry name" value="Chalcone/stilbene_synthase_AS"/>
</dbReference>
<dbReference type="InterPro" id="IPR011141">
    <property type="entry name" value="Polyketide_synthase_type-III"/>
</dbReference>
<dbReference type="InterPro" id="IPR016039">
    <property type="entry name" value="Thiolase-like"/>
</dbReference>
<dbReference type="PANTHER" id="PTHR11877:SF80">
    <property type="entry name" value="CHALCONE SYNTHASE 1"/>
    <property type="match status" value="1"/>
</dbReference>
<dbReference type="PANTHER" id="PTHR11877">
    <property type="entry name" value="HYDROXYMETHYLGLUTARYL-COA SYNTHASE"/>
    <property type="match status" value="1"/>
</dbReference>
<dbReference type="Pfam" id="PF02797">
    <property type="entry name" value="Chal_sti_synt_C"/>
    <property type="match status" value="1"/>
</dbReference>
<dbReference type="Pfam" id="PF00195">
    <property type="entry name" value="Chal_sti_synt_N"/>
    <property type="match status" value="1"/>
</dbReference>
<dbReference type="PIRSF" id="PIRSF000451">
    <property type="entry name" value="PKS_III"/>
    <property type="match status" value="1"/>
</dbReference>
<dbReference type="SUPFAM" id="SSF53901">
    <property type="entry name" value="Thiolase-like"/>
    <property type="match status" value="2"/>
</dbReference>
<dbReference type="PROSITE" id="PS00441">
    <property type="entry name" value="CHALCONE_SYNTH"/>
    <property type="match status" value="1"/>
</dbReference>
<reference key="1">
    <citation type="submission" date="1998-02" db="EMBL/GenBank/DDBJ databases">
        <title>cDNA cloning of polyketide synthases from Hydrangea macrophylla var. thunbergii.</title>
        <authorList>
            <person name="Akiyama T."/>
            <person name="Shibuya M."/>
            <person name="Ebizuka Y."/>
        </authorList>
    </citation>
    <scope>NUCLEOTIDE SEQUENCE [MRNA]</scope>
    <source>
        <strain>Var. Thunbergii</strain>
        <tissue>Leaf</tissue>
    </source>
</reference>
<protein>
    <recommendedName>
        <fullName>Chalcone synthase</fullName>
        <ecNumber>2.3.1.74</ecNumber>
    </recommendedName>
    <alternativeName>
        <fullName>Naringenin-chalcone synthase</fullName>
    </alternativeName>
</protein>
<organism>
    <name type="scientific">Hydrangea macrophylla</name>
    <name type="common">Bigleaf hydrangea</name>
    <name type="synonym">Viburnum macrophyllum</name>
    <dbReference type="NCBI Taxonomy" id="23110"/>
    <lineage>
        <taxon>Eukaryota</taxon>
        <taxon>Viridiplantae</taxon>
        <taxon>Streptophyta</taxon>
        <taxon>Embryophyta</taxon>
        <taxon>Tracheophyta</taxon>
        <taxon>Spermatophyta</taxon>
        <taxon>Magnoliopsida</taxon>
        <taxon>eudicotyledons</taxon>
        <taxon>Gunneridae</taxon>
        <taxon>Pentapetalae</taxon>
        <taxon>asterids</taxon>
        <taxon>Cornales</taxon>
        <taxon>Hydrangeaceae</taxon>
        <taxon>Hydrangeeae</taxon>
        <taxon>Hydrangea</taxon>
        <taxon>Hydrangea sect. Macrophyllae</taxon>
    </lineage>
</organism>
<sequence length="389" mass="42635">MVTVEEVRKAQRAEGPATILAIGTATPPNYVDQSTYPDFYFRVTNSEHKKELKAKFQRMCDNSQIKKRYMHLTEEILKENPNICAYMAPSLDARQDMVVVEIPKLGKEAATRAIKEWGQPKSKITHLVFCTTSGVDMPGADYQLTKLLGLRPSVKRLMMYQQGCFAGGTVLRLAKDLAENNKGARVLVVCSEITAVTFRGPSDTHLDSLVGQALFGDGAAAVIIGSDPMPEVEKPLFEIVSAAQTILPDSDGAIDGHLREVGLTFHLLKDVPGLISKNIEKSLVEAFRPLDISDWNSIFWIAHPGGPAILDQVEKKLALKPEKLRATRNVLSDYGNMSSACVLFIMDEMRKNSAEEGLMTTGEGLEWGVLFGFGPGLTVETVVLHGVST</sequence>
<keyword id="KW-0012">Acyltransferase</keyword>
<keyword id="KW-0284">Flavonoid biosynthesis</keyword>
<keyword id="KW-0808">Transferase</keyword>
<accession>O82144</accession>
<evidence type="ECO:0000255" key="1">
    <source>
        <dbReference type="PROSITE-ProRule" id="PRU10023"/>
    </source>
</evidence>
<evidence type="ECO:0000305" key="2"/>
<proteinExistence type="evidence at transcript level"/>
<gene>
    <name type="primary">CHS</name>
</gene>
<comment type="function">
    <text>The primary product of this enzyme is 4,2',4',6'-tetrahydroxychalcone (also termed naringenin-chalcone or chalcone) which can under specific conditions spontaneously isomerize into naringenin.</text>
</comment>
<comment type="catalytic activity">
    <reaction evidence="1">
        <text>(E)-4-coumaroyl-CoA + 3 malonyl-CoA + 3 H(+) = 2',4,4',6'-tetrahydroxychalcone + 3 CO2 + 4 CoA</text>
        <dbReference type="Rhea" id="RHEA:11128"/>
        <dbReference type="ChEBI" id="CHEBI:15378"/>
        <dbReference type="ChEBI" id="CHEBI:15413"/>
        <dbReference type="ChEBI" id="CHEBI:16526"/>
        <dbReference type="ChEBI" id="CHEBI:57287"/>
        <dbReference type="ChEBI" id="CHEBI:57384"/>
        <dbReference type="ChEBI" id="CHEBI:85008"/>
        <dbReference type="EC" id="2.3.1.74"/>
    </reaction>
</comment>
<comment type="pathway">
    <text>Secondary metabolite biosynthesis; flavonoid biosynthesis.</text>
</comment>
<comment type="similarity">
    <text evidence="2">Belongs to the thiolase-like superfamily. Chalcone/stilbene synthases family.</text>
</comment>
<name>CHSY_HYDMC</name>
<feature type="chain" id="PRO_0000215981" description="Chalcone synthase">
    <location>
        <begin position="1"/>
        <end position="389"/>
    </location>
</feature>
<feature type="active site" evidence="1">
    <location>
        <position position="164"/>
    </location>
</feature>